<accession>Q6D9B6</accession>
<sequence length="445" mass="47763">MSNRKYFGTDGIRGKVGDTPITPDFVLKLGWAAGKVLARHGSRKIIIGKDTRISGYMLESALEAGLAAAGLSASFTGPMPTPAVAYLTRTFRAEAGIVISASHNPYYDNGIKFFSIDGTKLPDDVEEAIEAEMEKPLTCVESSELGKASRIVDAAGRYIEFCKGTFPGELSLNGLKIVVDCANGATYHIAPSVLRELGAKVIAIGCEPDGMNINEECGATDVRQLQARVLAEKADVGLAFDGDGDRLIMVDHLGNKVDGDQILYIIAREGLRQGQLRGGAVGTLMSNMGLEVALKQLGIPFARAKVGDRYVLEMMQTKGWRIGAENSGHVILLDKTTTGDGVIAGLQVLTAIVKNHMSLHDLCSGMKLFPQILVNVRFTGENDPLEDKSVQQITQDVEKELAGRGRVLLRKSGTEPLIRVMVEGEHEETVIAQANRIADAVKAVS</sequence>
<evidence type="ECO:0000255" key="1">
    <source>
        <dbReference type="HAMAP-Rule" id="MF_01554"/>
    </source>
</evidence>
<dbReference type="EC" id="5.4.2.10" evidence="1"/>
<dbReference type="EMBL" id="BX950851">
    <property type="protein sequence ID" value="CAG73614.1"/>
    <property type="molecule type" value="Genomic_DNA"/>
</dbReference>
<dbReference type="RefSeq" id="WP_011092312.1">
    <property type="nucleotide sequence ID" value="NC_004547.2"/>
</dbReference>
<dbReference type="SMR" id="Q6D9B6"/>
<dbReference type="STRING" id="218491.ECA0700"/>
<dbReference type="GeneID" id="57207434"/>
<dbReference type="KEGG" id="eca:ECA0700"/>
<dbReference type="PATRIC" id="fig|218491.5.peg.697"/>
<dbReference type="eggNOG" id="COG1109">
    <property type="taxonomic scope" value="Bacteria"/>
</dbReference>
<dbReference type="HOGENOM" id="CLU_016950_7_0_6"/>
<dbReference type="OrthoDB" id="9803322at2"/>
<dbReference type="Proteomes" id="UP000007966">
    <property type="component" value="Chromosome"/>
</dbReference>
<dbReference type="GO" id="GO:0005829">
    <property type="term" value="C:cytosol"/>
    <property type="evidence" value="ECO:0007669"/>
    <property type="project" value="TreeGrafter"/>
</dbReference>
<dbReference type="GO" id="GO:0000287">
    <property type="term" value="F:magnesium ion binding"/>
    <property type="evidence" value="ECO:0007669"/>
    <property type="project" value="UniProtKB-UniRule"/>
</dbReference>
<dbReference type="GO" id="GO:0008966">
    <property type="term" value="F:phosphoglucosamine mutase activity"/>
    <property type="evidence" value="ECO:0007669"/>
    <property type="project" value="UniProtKB-UniRule"/>
</dbReference>
<dbReference type="GO" id="GO:0004615">
    <property type="term" value="F:phosphomannomutase activity"/>
    <property type="evidence" value="ECO:0007669"/>
    <property type="project" value="TreeGrafter"/>
</dbReference>
<dbReference type="GO" id="GO:0005975">
    <property type="term" value="P:carbohydrate metabolic process"/>
    <property type="evidence" value="ECO:0007669"/>
    <property type="project" value="InterPro"/>
</dbReference>
<dbReference type="GO" id="GO:0009252">
    <property type="term" value="P:peptidoglycan biosynthetic process"/>
    <property type="evidence" value="ECO:0007669"/>
    <property type="project" value="TreeGrafter"/>
</dbReference>
<dbReference type="GO" id="GO:0006048">
    <property type="term" value="P:UDP-N-acetylglucosamine biosynthetic process"/>
    <property type="evidence" value="ECO:0007669"/>
    <property type="project" value="TreeGrafter"/>
</dbReference>
<dbReference type="CDD" id="cd05802">
    <property type="entry name" value="GlmM"/>
    <property type="match status" value="1"/>
</dbReference>
<dbReference type="FunFam" id="3.30.310.50:FF:000001">
    <property type="entry name" value="Phosphoglucosamine mutase"/>
    <property type="match status" value="1"/>
</dbReference>
<dbReference type="FunFam" id="3.40.120.10:FF:000001">
    <property type="entry name" value="Phosphoglucosamine mutase"/>
    <property type="match status" value="1"/>
</dbReference>
<dbReference type="FunFam" id="3.40.120.10:FF:000003">
    <property type="entry name" value="Phosphoglucosamine mutase"/>
    <property type="match status" value="1"/>
</dbReference>
<dbReference type="Gene3D" id="3.40.120.10">
    <property type="entry name" value="Alpha-D-Glucose-1,6-Bisphosphate, subunit A, domain 3"/>
    <property type="match status" value="3"/>
</dbReference>
<dbReference type="Gene3D" id="3.30.310.50">
    <property type="entry name" value="Alpha-D-phosphohexomutase, C-terminal domain"/>
    <property type="match status" value="1"/>
</dbReference>
<dbReference type="HAMAP" id="MF_01554_B">
    <property type="entry name" value="GlmM_B"/>
    <property type="match status" value="1"/>
</dbReference>
<dbReference type="InterPro" id="IPR005844">
    <property type="entry name" value="A-D-PHexomutase_a/b/a-I"/>
</dbReference>
<dbReference type="InterPro" id="IPR016055">
    <property type="entry name" value="A-D-PHexomutase_a/b/a-I/II/III"/>
</dbReference>
<dbReference type="InterPro" id="IPR005845">
    <property type="entry name" value="A-D-PHexomutase_a/b/a-II"/>
</dbReference>
<dbReference type="InterPro" id="IPR005846">
    <property type="entry name" value="A-D-PHexomutase_a/b/a-III"/>
</dbReference>
<dbReference type="InterPro" id="IPR005843">
    <property type="entry name" value="A-D-PHexomutase_C"/>
</dbReference>
<dbReference type="InterPro" id="IPR036900">
    <property type="entry name" value="A-D-PHexomutase_C_sf"/>
</dbReference>
<dbReference type="InterPro" id="IPR016066">
    <property type="entry name" value="A-D-PHexomutase_CS"/>
</dbReference>
<dbReference type="InterPro" id="IPR005841">
    <property type="entry name" value="Alpha-D-phosphohexomutase_SF"/>
</dbReference>
<dbReference type="InterPro" id="IPR006352">
    <property type="entry name" value="GlmM_bact"/>
</dbReference>
<dbReference type="InterPro" id="IPR050060">
    <property type="entry name" value="Phosphoglucosamine_mutase"/>
</dbReference>
<dbReference type="NCBIfam" id="TIGR01455">
    <property type="entry name" value="glmM"/>
    <property type="match status" value="1"/>
</dbReference>
<dbReference type="NCBIfam" id="NF008139">
    <property type="entry name" value="PRK10887.1"/>
    <property type="match status" value="1"/>
</dbReference>
<dbReference type="PANTHER" id="PTHR42946:SF1">
    <property type="entry name" value="PHOSPHOGLUCOMUTASE (ALPHA-D-GLUCOSE-1,6-BISPHOSPHATE-DEPENDENT)"/>
    <property type="match status" value="1"/>
</dbReference>
<dbReference type="PANTHER" id="PTHR42946">
    <property type="entry name" value="PHOSPHOHEXOSE MUTASE"/>
    <property type="match status" value="1"/>
</dbReference>
<dbReference type="Pfam" id="PF02878">
    <property type="entry name" value="PGM_PMM_I"/>
    <property type="match status" value="1"/>
</dbReference>
<dbReference type="Pfam" id="PF02879">
    <property type="entry name" value="PGM_PMM_II"/>
    <property type="match status" value="1"/>
</dbReference>
<dbReference type="Pfam" id="PF02880">
    <property type="entry name" value="PGM_PMM_III"/>
    <property type="match status" value="1"/>
</dbReference>
<dbReference type="Pfam" id="PF00408">
    <property type="entry name" value="PGM_PMM_IV"/>
    <property type="match status" value="1"/>
</dbReference>
<dbReference type="PRINTS" id="PR00509">
    <property type="entry name" value="PGMPMM"/>
</dbReference>
<dbReference type="SUPFAM" id="SSF55957">
    <property type="entry name" value="Phosphoglucomutase, C-terminal domain"/>
    <property type="match status" value="1"/>
</dbReference>
<dbReference type="SUPFAM" id="SSF53738">
    <property type="entry name" value="Phosphoglucomutase, first 3 domains"/>
    <property type="match status" value="3"/>
</dbReference>
<dbReference type="PROSITE" id="PS00710">
    <property type="entry name" value="PGM_PMM"/>
    <property type="match status" value="1"/>
</dbReference>
<keyword id="KW-0413">Isomerase</keyword>
<keyword id="KW-0460">Magnesium</keyword>
<keyword id="KW-0479">Metal-binding</keyword>
<keyword id="KW-0597">Phosphoprotein</keyword>
<keyword id="KW-1185">Reference proteome</keyword>
<protein>
    <recommendedName>
        <fullName evidence="1">Phosphoglucosamine mutase</fullName>
        <ecNumber evidence="1">5.4.2.10</ecNumber>
    </recommendedName>
</protein>
<proteinExistence type="inferred from homology"/>
<comment type="function">
    <text evidence="1">Catalyzes the conversion of glucosamine-6-phosphate to glucosamine-1-phosphate.</text>
</comment>
<comment type="catalytic activity">
    <reaction evidence="1">
        <text>alpha-D-glucosamine 1-phosphate = D-glucosamine 6-phosphate</text>
        <dbReference type="Rhea" id="RHEA:23424"/>
        <dbReference type="ChEBI" id="CHEBI:58516"/>
        <dbReference type="ChEBI" id="CHEBI:58725"/>
        <dbReference type="EC" id="5.4.2.10"/>
    </reaction>
</comment>
<comment type="cofactor">
    <cofactor evidence="1">
        <name>Mg(2+)</name>
        <dbReference type="ChEBI" id="CHEBI:18420"/>
    </cofactor>
    <text evidence="1">Binds 1 Mg(2+) ion per subunit.</text>
</comment>
<comment type="PTM">
    <text evidence="1">Activated by phosphorylation.</text>
</comment>
<comment type="similarity">
    <text evidence="1">Belongs to the phosphohexose mutase family.</text>
</comment>
<organism>
    <name type="scientific">Pectobacterium atrosepticum (strain SCRI 1043 / ATCC BAA-672)</name>
    <name type="common">Erwinia carotovora subsp. atroseptica</name>
    <dbReference type="NCBI Taxonomy" id="218491"/>
    <lineage>
        <taxon>Bacteria</taxon>
        <taxon>Pseudomonadati</taxon>
        <taxon>Pseudomonadota</taxon>
        <taxon>Gammaproteobacteria</taxon>
        <taxon>Enterobacterales</taxon>
        <taxon>Pectobacteriaceae</taxon>
        <taxon>Pectobacterium</taxon>
    </lineage>
</organism>
<reference key="1">
    <citation type="journal article" date="2004" name="Proc. Natl. Acad. Sci. U.S.A.">
        <title>Genome sequence of the enterobacterial phytopathogen Erwinia carotovora subsp. atroseptica and characterization of virulence factors.</title>
        <authorList>
            <person name="Bell K.S."/>
            <person name="Sebaihia M."/>
            <person name="Pritchard L."/>
            <person name="Holden M.T.G."/>
            <person name="Hyman L.J."/>
            <person name="Holeva M.C."/>
            <person name="Thomson N.R."/>
            <person name="Bentley S.D."/>
            <person name="Churcher L.J.C."/>
            <person name="Mungall K."/>
            <person name="Atkin R."/>
            <person name="Bason N."/>
            <person name="Brooks K."/>
            <person name="Chillingworth T."/>
            <person name="Clark K."/>
            <person name="Doggett J."/>
            <person name="Fraser A."/>
            <person name="Hance Z."/>
            <person name="Hauser H."/>
            <person name="Jagels K."/>
            <person name="Moule S."/>
            <person name="Norbertczak H."/>
            <person name="Ormond D."/>
            <person name="Price C."/>
            <person name="Quail M.A."/>
            <person name="Sanders M."/>
            <person name="Walker D."/>
            <person name="Whitehead S."/>
            <person name="Salmond G.P.C."/>
            <person name="Birch P.R.J."/>
            <person name="Parkhill J."/>
            <person name="Toth I.K."/>
        </authorList>
    </citation>
    <scope>NUCLEOTIDE SEQUENCE [LARGE SCALE GENOMIC DNA]</scope>
    <source>
        <strain>SCRI 1043 / ATCC BAA-672</strain>
    </source>
</reference>
<feature type="chain" id="PRO_0000147886" description="Phosphoglucosamine mutase">
    <location>
        <begin position="1"/>
        <end position="445"/>
    </location>
</feature>
<feature type="active site" description="Phosphoserine intermediate" evidence="1">
    <location>
        <position position="102"/>
    </location>
</feature>
<feature type="binding site" description="via phosphate group" evidence="1">
    <location>
        <position position="102"/>
    </location>
    <ligand>
        <name>Mg(2+)</name>
        <dbReference type="ChEBI" id="CHEBI:18420"/>
    </ligand>
</feature>
<feature type="binding site" evidence="1">
    <location>
        <position position="241"/>
    </location>
    <ligand>
        <name>Mg(2+)</name>
        <dbReference type="ChEBI" id="CHEBI:18420"/>
    </ligand>
</feature>
<feature type="binding site" evidence="1">
    <location>
        <position position="243"/>
    </location>
    <ligand>
        <name>Mg(2+)</name>
        <dbReference type="ChEBI" id="CHEBI:18420"/>
    </ligand>
</feature>
<feature type="binding site" evidence="1">
    <location>
        <position position="245"/>
    </location>
    <ligand>
        <name>Mg(2+)</name>
        <dbReference type="ChEBI" id="CHEBI:18420"/>
    </ligand>
</feature>
<feature type="modified residue" description="Phosphoserine" evidence="1">
    <location>
        <position position="102"/>
    </location>
</feature>
<name>GLMM_PECAS</name>
<gene>
    <name evidence="1" type="primary">glmM</name>
    <name type="ordered locus">ECA0700</name>
</gene>